<comment type="function">
    <text evidence="1">Functions as a sorting receptor in the Golgi compartment required for the intracellular sorting and delivery of soluble vacuolar proteins, like carboxypeptidase Y (CPY) and proteinase A. Executes multiple rounds of sorting by cycling between the late Golgi and a prevacuolar endosome-like compartment (By similarity).</text>
</comment>
<comment type="subcellular location">
    <subcellularLocation>
        <location evidence="1">Golgi apparatus</location>
        <location evidence="1">trans-Golgi network membrane</location>
        <topology evidence="1">Multi-pass membrane protein</topology>
    </subcellularLocation>
    <subcellularLocation>
        <location evidence="1">Prevacuolar compartment membrane</location>
        <topology evidence="1">Multi-pass membrane protein</topology>
    </subcellularLocation>
    <text evidence="1">Cycles between the Golgi apparatus and the prevacuolar compartment.</text>
</comment>
<comment type="similarity">
    <text evidence="3">Belongs to the VPS10-related sortilin family.</text>
</comment>
<protein>
    <recommendedName>
        <fullName>Vacuolar protein sorting/targeting protein 10</fullName>
    </recommendedName>
    <alternativeName>
        <fullName>Carboxypeptidase Y receptor</fullName>
        <shortName>CPY receptor</shortName>
    </alternativeName>
    <alternativeName>
        <fullName>Sortilin vps10</fullName>
    </alternativeName>
    <alternativeName>
        <fullName>Vacuolar carboxypeptidase sorting receptor vps10</fullName>
    </alternativeName>
</protein>
<sequence length="1525" mass="171638">MRVRGALQAAALLASALWASPLLAKDHPDFKTTKLDTQPNNLNYFQGSDTILFHDPHKANLWRSDDAGATWSVVKDIPDGKVARLYMHDFDPKRAFAITDGRKHYRTTDQGKTWKKFEINAEWDTERYDILHFHATDPDRIIFNGLNCLGFLCEEVSLYTIDGFDTPAKPLRPDTLGCWWAKSNALFTTGDSDLDKDRILCIIMGVDSIFTEDRRLVISDDFFKADKEGNIQEFEPNLAGDKPVRGVVNVAAVKRYFMVATTSANTDEMALFISTDTKKWQRAMFPNAHDDHDHKIVQEAYTVLESTNYSIQLNVMTGSKSQPMGIMFTSNYDGTYFTENLEYTNLNMYGHVDFEKIAGIQGIFLVNKVDNGKDVDEKPSTKKKLVSEITFDDGRTFEKVTADGKRIHLHSVTELNNVGRVFSSPAPGLVMANGNTGDYLEDYWDANLYVSDDAGKTWKKALKGPHKYEFGDQGSILVAVRDSKEEDVSEISYSLDHGENWVEEKLPDDLKIQPWILTTTPDSTTLQFVLIGKAKGAWQVIHIDFEALHEATCKDSDMEEWHARVDKDGESTCIMGHTQTFPRRKKDAKCFLKKEFKLAEVETKDCDCTDQDYECDYSFERNDKGNCVSKGPIPIPEGACKDGDKNGKFMGTSGYRKIPGNTCKDTKDTKDKYKDVERSCGDGIGAPPEEATGELQQVDTKGKFGHWTQWEKHYLERGESSSDSSETIIMRGKNRTVDDSGPKAGPIWRTTDHGKTWEKIDFFKDEEVISIVPHPTVKDWVFFLTEGKKLIYTPDRGKRFRTFDVPQPADLEAAANGIFPLIFHPDKPNWLIWLGKKCESKNDCYRVAYGTKDGERWETLARDVYRCEFTGAEAYGRKYANRALEQILCLKHEKEGASDSALQLVSSNDWFNKDEKVRLKDAKEFATMAEFIVVATEDTEKKTLRAHASLDGGLYSEAKFPFGFEVPHQHAYTVLDSSTHAVNLFVATKMEGDKSLGTILKSNSNGTSYVVSVKNVNCDQYFYVDFEKMVGLEGVALVNVVANPDAKSSAPQKLQTKITHNDGAQWAYLPTPSKDEFGRFPCSSSGTEKCALHIQGYTQRRDRGKTYSSEGAVGVMFGWGNVGDSLGPLKDADTFMTTDAGITWKRVKKGRWNWALGDQGSIIVMVPIRGQKTDTLEYSLDQGATWKKHTFSKEKVDIWDLTTTRSGNSQNFLIWGENSDGLFTTKIDFTKFTDHVCKYDPENLGKSDYQIFSPKHPLQPDGCLFGHVSQYLRKKPGLKCFNDFRLDPLYSKQNCTCTRSDFECDFNYELDNHGQCALVKGLKPQDPKLWCKEHPDEIEYYEPTGYRRIPLTTCQGGADFEKQAAVHPCPGHEDDFERKHRISGIAIFFAVVLPVAAASAIGWWVYRNWDGKFGQIRLGEQGASTMEFFDADRPWVKYPVIALSAVVALAGAMPLVLAAIWRTAKNTAQRFGVGGGGRGGWSRLDGGGASRTFRTRDSFARGRGDYTIVDEDEGELLGEESDEEV</sequence>
<organism>
    <name type="scientific">Sordaria macrospora (strain ATCC MYA-333 / DSM 997 / K(L3346) / K-hell)</name>
    <dbReference type="NCBI Taxonomy" id="771870"/>
    <lineage>
        <taxon>Eukaryota</taxon>
        <taxon>Fungi</taxon>
        <taxon>Dikarya</taxon>
        <taxon>Ascomycota</taxon>
        <taxon>Pezizomycotina</taxon>
        <taxon>Sordariomycetes</taxon>
        <taxon>Sordariomycetidae</taxon>
        <taxon>Sordariales</taxon>
        <taxon>Sordariaceae</taxon>
        <taxon>Sordaria</taxon>
    </lineage>
</organism>
<name>VPS10_SORMK</name>
<feature type="signal peptide" evidence="2">
    <location>
        <begin position="1"/>
        <end position="24"/>
    </location>
</feature>
<feature type="chain" id="PRO_0000407536" description="Vacuolar protein sorting/targeting protein 10">
    <location>
        <begin position="25"/>
        <end position="1525"/>
    </location>
</feature>
<feature type="topological domain" description="Lumenal" evidence="2">
    <location>
        <begin position="25"/>
        <end position="1384"/>
    </location>
</feature>
<feature type="transmembrane region" description="Helical" evidence="2">
    <location>
        <begin position="1385"/>
        <end position="1405"/>
    </location>
</feature>
<feature type="topological domain" description="Cytoplasmic" evidence="2">
    <location>
        <begin position="1406"/>
        <end position="1439"/>
    </location>
</feature>
<feature type="transmembrane region" description="Helical" evidence="2">
    <location>
        <begin position="1440"/>
        <end position="1460"/>
    </location>
</feature>
<feature type="topological domain" description="Lumenal" evidence="2">
    <location>
        <begin position="1461"/>
        <end position="1525"/>
    </location>
</feature>
<feature type="repeat" description="BNR 1">
    <location>
        <begin position="62"/>
        <end position="72"/>
    </location>
</feature>
<feature type="repeat" description="BNR 2">
    <location>
        <begin position="105"/>
        <end position="116"/>
    </location>
</feature>
<feature type="repeat" description="BNR 3">
    <location>
        <begin position="449"/>
        <end position="460"/>
    </location>
</feature>
<feature type="repeat" description="BNR 4">
    <location>
        <begin position="493"/>
        <end position="502"/>
    </location>
</feature>
<feature type="repeat" description="BNR 5">
    <location>
        <begin position="748"/>
        <end position="759"/>
    </location>
</feature>
<feature type="repeat" description="BNR 6">
    <location>
        <begin position="1135"/>
        <end position="1145"/>
    </location>
</feature>
<feature type="repeat" description="BNR 7">
    <location>
        <begin position="1178"/>
        <end position="1188"/>
    </location>
</feature>
<feature type="glycosylation site" description="N-linked (GlcNAc...) asparagine" evidence="2">
    <location>
        <position position="308"/>
    </location>
</feature>
<feature type="glycosylation site" description="N-linked (GlcNAc...) asparagine" evidence="2">
    <location>
        <position position="734"/>
    </location>
</feature>
<feature type="glycosylation site" description="N-linked (GlcNAc...) asparagine" evidence="2">
    <location>
        <position position="1005"/>
    </location>
</feature>
<feature type="glycosylation site" description="N-linked (GlcNAc...) asparagine" evidence="2">
    <location>
        <position position="1294"/>
    </location>
</feature>
<evidence type="ECO:0000250" key="1"/>
<evidence type="ECO:0000255" key="2"/>
<evidence type="ECO:0000305" key="3"/>
<keyword id="KW-0325">Glycoprotein</keyword>
<keyword id="KW-0333">Golgi apparatus</keyword>
<keyword id="KW-0472">Membrane</keyword>
<keyword id="KW-0653">Protein transport</keyword>
<keyword id="KW-0675">Receptor</keyword>
<keyword id="KW-1185">Reference proteome</keyword>
<keyword id="KW-0677">Repeat</keyword>
<keyword id="KW-0732">Signal</keyword>
<keyword id="KW-0812">Transmembrane</keyword>
<keyword id="KW-1133">Transmembrane helix</keyword>
<keyword id="KW-0813">Transport</keyword>
<gene>
    <name type="primary">vps10</name>
    <name type="ORF">SMAC_04327</name>
</gene>
<reference key="1">
    <citation type="journal article" date="2010" name="PLoS Genet.">
        <title>De novo assembly of a 40 Mb eukaryotic genome from short sequence reads: Sordaria macrospora, a model organism for fungal morphogenesis.</title>
        <authorList>
            <person name="Nowrousian M."/>
            <person name="Stajich J.E."/>
            <person name="Chu M."/>
            <person name="Engh I."/>
            <person name="Espagne E."/>
            <person name="Halliday K."/>
            <person name="Kamerewerd J."/>
            <person name="Kempken F."/>
            <person name="Knab B."/>
            <person name="Kuo H.-C."/>
            <person name="Osiewacz H.D."/>
            <person name="Poeggeler S."/>
            <person name="Read N.D."/>
            <person name="Seiler S."/>
            <person name="Smith K.M."/>
            <person name="Zickler D."/>
            <person name="Kueck U."/>
            <person name="Freitag M."/>
        </authorList>
    </citation>
    <scope>NUCLEOTIDE SEQUENCE [LARGE SCALE GENOMIC DNA]</scope>
    <source>
        <strain>ATCC MYA-333 / DSM 997 / K(L3346) / K-hell</strain>
    </source>
</reference>
<proteinExistence type="inferred from homology"/>
<accession>D1Z9Q3</accession>
<accession>F7W1I5</accession>
<dbReference type="EMBL" id="CABT02000019">
    <property type="protein sequence ID" value="CCC04960.1"/>
    <property type="molecule type" value="Genomic_DNA"/>
</dbReference>
<dbReference type="SMR" id="D1Z9Q3"/>
<dbReference type="FunCoup" id="D1Z9Q3">
    <property type="interactions" value="177"/>
</dbReference>
<dbReference type="STRING" id="771870.D1Z9Q3"/>
<dbReference type="GlyCosmos" id="D1Z9Q3">
    <property type="glycosylation" value="4 sites, No reported glycans"/>
</dbReference>
<dbReference type="VEuPathDB" id="FungiDB:SMAC_04327"/>
<dbReference type="eggNOG" id="KOG3511">
    <property type="taxonomic scope" value="Eukaryota"/>
</dbReference>
<dbReference type="HOGENOM" id="CLU_000700_0_0_1"/>
<dbReference type="InParanoid" id="D1Z9Q3"/>
<dbReference type="OMA" id="ATMSEFI"/>
<dbReference type="OrthoDB" id="443634at2759"/>
<dbReference type="Proteomes" id="UP000001881">
    <property type="component" value="Unassembled WGS sequence"/>
</dbReference>
<dbReference type="GO" id="GO:0005829">
    <property type="term" value="C:cytosol"/>
    <property type="evidence" value="ECO:0007669"/>
    <property type="project" value="GOC"/>
</dbReference>
<dbReference type="GO" id="GO:0005794">
    <property type="term" value="C:Golgi apparatus"/>
    <property type="evidence" value="ECO:0007669"/>
    <property type="project" value="UniProtKB-SubCell"/>
</dbReference>
<dbReference type="GO" id="GO:0016020">
    <property type="term" value="C:membrane"/>
    <property type="evidence" value="ECO:0007669"/>
    <property type="project" value="UniProtKB-KW"/>
</dbReference>
<dbReference type="GO" id="GO:0006895">
    <property type="term" value="P:Golgi to endosome transport"/>
    <property type="evidence" value="ECO:0007669"/>
    <property type="project" value="TreeGrafter"/>
</dbReference>
<dbReference type="GO" id="GO:0006896">
    <property type="term" value="P:Golgi to vacuole transport"/>
    <property type="evidence" value="ECO:0007669"/>
    <property type="project" value="TreeGrafter"/>
</dbReference>
<dbReference type="GO" id="GO:0006623">
    <property type="term" value="P:protein targeting to vacuole"/>
    <property type="evidence" value="ECO:0007669"/>
    <property type="project" value="TreeGrafter"/>
</dbReference>
<dbReference type="CDD" id="cd15482">
    <property type="entry name" value="Sialidase_non-viral"/>
    <property type="match status" value="3"/>
</dbReference>
<dbReference type="FunFam" id="2.130.10.10:FF:000676">
    <property type="entry name" value="Sortilin"/>
    <property type="match status" value="1"/>
</dbReference>
<dbReference type="FunFam" id="3.30.60.270:FF:000005">
    <property type="entry name" value="Sortilin"/>
    <property type="match status" value="2"/>
</dbReference>
<dbReference type="Gene3D" id="2.10.70.80">
    <property type="match status" value="2"/>
</dbReference>
<dbReference type="Gene3D" id="2.120.10.10">
    <property type="match status" value="1"/>
</dbReference>
<dbReference type="Gene3D" id="3.30.60.270">
    <property type="match status" value="2"/>
</dbReference>
<dbReference type="Gene3D" id="2.130.10.10">
    <property type="entry name" value="YVTN repeat-like/Quinoprotein amine dehydrogenase"/>
    <property type="match status" value="2"/>
</dbReference>
<dbReference type="InterPro" id="IPR031777">
    <property type="entry name" value="Sortilin_C"/>
</dbReference>
<dbReference type="InterPro" id="IPR031778">
    <property type="entry name" value="Sortilin_N"/>
</dbReference>
<dbReference type="InterPro" id="IPR006581">
    <property type="entry name" value="VPS10"/>
</dbReference>
<dbReference type="InterPro" id="IPR050310">
    <property type="entry name" value="VPS10-sortilin"/>
</dbReference>
<dbReference type="InterPro" id="IPR015943">
    <property type="entry name" value="WD40/YVTN_repeat-like_dom_sf"/>
</dbReference>
<dbReference type="PANTHER" id="PTHR12106">
    <property type="entry name" value="SORTILIN RELATED"/>
    <property type="match status" value="1"/>
</dbReference>
<dbReference type="PANTHER" id="PTHR12106:SF27">
    <property type="entry name" value="SORTILIN-RELATED RECEPTOR"/>
    <property type="match status" value="1"/>
</dbReference>
<dbReference type="Pfam" id="PF15902">
    <property type="entry name" value="Sortilin-Vps10"/>
    <property type="match status" value="2"/>
</dbReference>
<dbReference type="Pfam" id="PF15901">
    <property type="entry name" value="Sortilin_C"/>
    <property type="match status" value="2"/>
</dbReference>
<dbReference type="SMART" id="SM00602">
    <property type="entry name" value="VPS10"/>
    <property type="match status" value="2"/>
</dbReference>
<dbReference type="SUPFAM" id="SSF110296">
    <property type="entry name" value="Oligoxyloglucan reducing end-specific cellobiohydrolase"/>
    <property type="match status" value="2"/>
</dbReference>